<comment type="function">
    <text>Capsid protein self-assembles to form rod-shaped virions about 18 nm in diameter with a central canal enclosing the viral genomic RNA.</text>
</comment>
<comment type="subcellular location">
    <subcellularLocation>
        <location evidence="2">Virion</location>
    </subcellularLocation>
</comment>
<comment type="similarity">
    <text evidence="2">Belongs to the virgaviridae capsid protein family.</text>
</comment>
<keyword id="KW-0007">Acetylation</keyword>
<keyword id="KW-0167">Capsid protein</keyword>
<keyword id="KW-1139">Helical capsid protein</keyword>
<keyword id="KW-0946">Virion</keyword>
<feature type="initiator methionine" description="Removed; by host" evidence="1">
    <location>
        <position position="1"/>
    </location>
</feature>
<feature type="chain" id="PRO_0000144920" description="Capsid protein">
    <location>
        <begin position="2"/>
        <end position="159"/>
    </location>
</feature>
<feature type="modified residue" description="N-acetylserine; by host" evidence="1">
    <location>
        <position position="2"/>
    </location>
</feature>
<name>CAPSD_TMVKR</name>
<accession>P69689</accession>
<accession>P03570</accession>
<organismHost>
    <name type="scientific">Nicotiana tabacum</name>
    <name type="common">Common tobacco</name>
    <dbReference type="NCBI Taxonomy" id="4097"/>
</organismHost>
<sequence length="159" mass="17624">MSYSITTPSQFVFLSSAWADPIELINLCTNALGNQFQTQQARTVVQRQFSEVWKPSPQVTVRFPDSDFKVYRYNAVLDPLVTALLGAFDTRNRIIEVENQANPTTAETLDATRRVDDATVAIRSAINNLIVELIRGTGSYNRSSFESSSGLVWTSGPAT</sequence>
<protein>
    <recommendedName>
        <fullName>Capsid protein</fullName>
    </recommendedName>
    <alternativeName>
        <fullName>Coat protein</fullName>
    </alternativeName>
</protein>
<proteinExistence type="inferred from homology"/>
<evidence type="ECO:0000250" key="1"/>
<evidence type="ECO:0000305" key="2"/>
<dbReference type="EMBL" id="X68110">
    <property type="status" value="NOT_ANNOTATED_CDS"/>
    <property type="molecule type" value="Genomic_RNA"/>
</dbReference>
<dbReference type="SMR" id="P69689"/>
<dbReference type="Proteomes" id="UP000008250">
    <property type="component" value="Genome"/>
</dbReference>
<dbReference type="GO" id="GO:0019029">
    <property type="term" value="C:helical viral capsid"/>
    <property type="evidence" value="ECO:0007669"/>
    <property type="project" value="UniProtKB-KW"/>
</dbReference>
<dbReference type="GO" id="GO:0005198">
    <property type="term" value="F:structural molecule activity"/>
    <property type="evidence" value="ECO:0007669"/>
    <property type="project" value="InterPro"/>
</dbReference>
<dbReference type="Gene3D" id="1.20.120.70">
    <property type="entry name" value="Tobacco mosaic virus-like, coat protein"/>
    <property type="match status" value="1"/>
</dbReference>
<dbReference type="InterPro" id="IPR001337">
    <property type="entry name" value="TMV-like_coat"/>
</dbReference>
<dbReference type="InterPro" id="IPR036417">
    <property type="entry name" value="TMV-like_coat_sf"/>
</dbReference>
<dbReference type="Pfam" id="PF00721">
    <property type="entry name" value="TMV_coat"/>
    <property type="match status" value="1"/>
</dbReference>
<dbReference type="SUPFAM" id="SSF47195">
    <property type="entry name" value="TMV-like viral coat proteins"/>
    <property type="match status" value="1"/>
</dbReference>
<gene>
    <name type="primary">CP</name>
</gene>
<reference key="1">
    <citation type="journal article" date="1992" name="Nucleic Acids Res.">
        <title>Nucleotide sequence of cDNA of the tobacco mosaic virus RNA isolated in Korea.</title>
        <authorList>
            <person name="Kob K.H."/>
            <person name="Song E.K."/>
            <person name="Lee S.Y."/>
            <person name="Park Y.I."/>
            <person name="Park W.M."/>
        </authorList>
    </citation>
    <scope>NUCLEOTIDE SEQUENCE [GENOMIC RNA]</scope>
</reference>
<organism>
    <name type="scientific">Tobacco mosaic virus (strain Korean NC 82)</name>
    <name type="common">TMV</name>
    <dbReference type="NCBI Taxonomy" id="31746"/>
    <lineage>
        <taxon>Viruses</taxon>
        <taxon>Riboviria</taxon>
        <taxon>Orthornavirae</taxon>
        <taxon>Kitrinoviricota</taxon>
        <taxon>Alsuviricetes</taxon>
        <taxon>Martellivirales</taxon>
        <taxon>Virgaviridae</taxon>
        <taxon>Tobamovirus</taxon>
        <taxon>Tobacco mosaic virus</taxon>
    </lineage>
</organism>